<organism>
    <name type="scientific">Oryza sativa subsp. japonica</name>
    <name type="common">Rice</name>
    <dbReference type="NCBI Taxonomy" id="39947"/>
    <lineage>
        <taxon>Eukaryota</taxon>
        <taxon>Viridiplantae</taxon>
        <taxon>Streptophyta</taxon>
        <taxon>Embryophyta</taxon>
        <taxon>Tracheophyta</taxon>
        <taxon>Spermatophyta</taxon>
        <taxon>Magnoliopsida</taxon>
        <taxon>Liliopsida</taxon>
        <taxon>Poales</taxon>
        <taxon>Poaceae</taxon>
        <taxon>BOP clade</taxon>
        <taxon>Oryzoideae</taxon>
        <taxon>Oryzeae</taxon>
        <taxon>Oryzinae</taxon>
        <taxon>Oryza</taxon>
        <taxon>Oryza sativa</taxon>
    </lineage>
</organism>
<reference key="1">
    <citation type="journal article" date="2005" name="Nature">
        <title>The map-based sequence of the rice genome.</title>
        <authorList>
            <consortium name="International rice genome sequencing project (IRGSP)"/>
        </authorList>
    </citation>
    <scope>NUCLEOTIDE SEQUENCE [LARGE SCALE GENOMIC DNA]</scope>
    <source>
        <strain>cv. Nipponbare</strain>
    </source>
</reference>
<reference key="2">
    <citation type="journal article" date="2008" name="Nucleic Acids Res.">
        <title>The rice annotation project database (RAP-DB): 2008 update.</title>
        <authorList>
            <consortium name="The rice annotation project (RAP)"/>
        </authorList>
    </citation>
    <scope>GENOME REANNOTATION</scope>
    <source>
        <strain>cv. Nipponbare</strain>
    </source>
</reference>
<reference key="3">
    <citation type="journal article" date="2013" name="Rice">
        <title>Improvement of the Oryza sativa Nipponbare reference genome using next generation sequence and optical map data.</title>
        <authorList>
            <person name="Kawahara Y."/>
            <person name="de la Bastide M."/>
            <person name="Hamilton J.P."/>
            <person name="Kanamori H."/>
            <person name="McCombie W.R."/>
            <person name="Ouyang S."/>
            <person name="Schwartz D.C."/>
            <person name="Tanaka T."/>
            <person name="Wu J."/>
            <person name="Zhou S."/>
            <person name="Childs K.L."/>
            <person name="Davidson R.M."/>
            <person name="Lin H."/>
            <person name="Quesada-Ocampo L."/>
            <person name="Vaillancourt B."/>
            <person name="Sakai H."/>
            <person name="Lee S.S."/>
            <person name="Kim J."/>
            <person name="Numa H."/>
            <person name="Itoh T."/>
            <person name="Buell C.R."/>
            <person name="Matsumoto T."/>
        </authorList>
    </citation>
    <scope>GENOME REANNOTATION</scope>
    <source>
        <strain>cv. Nipponbare</strain>
    </source>
</reference>
<reference key="4">
    <citation type="journal article" date="2003" name="Science">
        <title>Collection, mapping, and annotation of over 28,000 cDNA clones from japonica rice.</title>
        <authorList>
            <consortium name="The rice full-length cDNA consortium"/>
        </authorList>
    </citation>
    <scope>NUCLEOTIDE SEQUENCE [LARGE SCALE MRNA]</scope>
    <source>
        <strain>cv. Nipponbare</strain>
    </source>
</reference>
<reference key="5">
    <citation type="journal article" date="2005" name="Plant Physiol.">
        <title>Phylogenetic analyses identify 10 classes of the protein disulfide isomerase family in plants, including single-domain protein disulfide isomerase-related proteins.</title>
        <authorList>
            <person name="Houston N.L."/>
            <person name="Fan C."/>
            <person name="Xiang J.Q."/>
            <person name="Schulze J.M."/>
            <person name="Jung R."/>
            <person name="Boston R.S."/>
        </authorList>
    </citation>
    <scope>GENE FAMILY</scope>
    <scope>NOMENCLATURE</scope>
</reference>
<reference key="6">
    <citation type="journal article" date="2010" name="BMC Plant Biol.">
        <title>The protein disulfide isomerase gene family in bread wheat (T. aestivum L.).</title>
        <authorList>
            <person name="d'Aloisio E."/>
            <person name="Paolacci A.R."/>
            <person name="Dhanapal A.P."/>
            <person name="Tanzarella O.A."/>
            <person name="Porceddu E."/>
            <person name="Ciaffi M."/>
        </authorList>
    </citation>
    <scope>GENE FAMILY</scope>
    <scope>NOMENCLATURE</scope>
</reference>
<accession>Q5WA72</accession>
<accession>A0A0P0WSS8</accession>
<sequence length="533" mass="59032">MRARRVVAAAAVLLLFAVVAVARLDLDDDGDDSEVLDELLAVDEEEERGELGGGGEAAAAEAVRRAQSMVLVLDNDNARRAVEENAEVLLLGYAPWCERSAQLMPRFAEAAAALRAMGSAVAFAKLDGERYPKAASAVGVKGFPTVLLFVNGTEHQFTGLHTKDAIVTWVRKKTGAPASRIQSKDSAEEFLKKDQTFAVGLFKNFEGAEYEEFVKAATSENEVQFVETNDRNVAKILFPGIASEEQFLGLVKSEPEKFEKFNGAFEEKEIIQFVELNKFPLITVFTDLNSGKVYGSPIKLQVFTFAEAYDFEDLESMIQEVARGFKTKIMLIYVDTAEEKLAKPFLTLYGLEPEKPTVTAFDTSKGTKYLMEAEINAKNLQDFCLSLLEGTLPPYFRSEPVPEEKGPIEKVVGRTFDSSVLESPQNVFLEVHAPWCVDCEAISKNVEKLAKHFNDLGQTNLKFARIDASVNEHPKLQINNYPTLLLYPAQDKSNPIKLSKKSNLKDMAKFVKEKLQIADVETVAAGDIVKDEL</sequence>
<proteinExistence type="evidence at transcript level"/>
<feature type="signal peptide" evidence="2">
    <location>
        <begin position="1"/>
        <end position="22"/>
    </location>
</feature>
<feature type="chain" id="PRO_0000400032" description="Protein disulfide isomerase-like 1-5">
    <location>
        <begin position="23"/>
        <end position="533"/>
    </location>
</feature>
<feature type="domain" description="Thioredoxin 1" evidence="3">
    <location>
        <begin position="51"/>
        <end position="196"/>
    </location>
</feature>
<feature type="domain" description="Thioredoxin 2" evidence="3">
    <location>
        <begin position="387"/>
        <end position="516"/>
    </location>
</feature>
<feature type="short sequence motif" description="Prevents secretion from ER" evidence="4">
    <location>
        <begin position="530"/>
        <end position="533"/>
    </location>
</feature>
<feature type="active site" description="Nucleophile" evidence="1">
    <location>
        <position position="97"/>
    </location>
</feature>
<feature type="active site" description="Nucleophile" evidence="1">
    <location>
        <position position="436"/>
    </location>
</feature>
<feature type="active site" description="Nucleophile" evidence="1">
    <location>
        <position position="439"/>
    </location>
</feature>
<feature type="glycosylation site" description="N-linked (GlcNAc...) asparagine" evidence="2">
    <location>
        <position position="151"/>
    </location>
</feature>
<feature type="disulfide bond" description="Redox-active" evidence="3">
    <location>
        <begin position="436"/>
        <end position="439"/>
    </location>
</feature>
<feature type="sequence conflict" description="In Ref. 4; AK073970." evidence="5" ref="4">
    <original>A</original>
    <variation>T</variation>
    <location>
        <position position="208"/>
    </location>
</feature>
<keyword id="KW-1015">Disulfide bond</keyword>
<keyword id="KW-0256">Endoplasmic reticulum</keyword>
<keyword id="KW-0325">Glycoprotein</keyword>
<keyword id="KW-0413">Isomerase</keyword>
<keyword id="KW-0676">Redox-active center</keyword>
<keyword id="KW-1185">Reference proteome</keyword>
<keyword id="KW-0677">Repeat</keyword>
<keyword id="KW-0732">Signal</keyword>
<comment type="function">
    <text evidence="1">Acts as a protein-folding catalyst that interacts with nascent polypeptides to catalyze the formation, isomerization, and reduction or oxidation of disulfide bonds. May play a role in storage protein biogenesis (By similarity).</text>
</comment>
<comment type="catalytic activity">
    <reaction>
        <text>Catalyzes the rearrangement of -S-S- bonds in proteins.</text>
        <dbReference type="EC" id="5.3.4.1"/>
    </reaction>
</comment>
<comment type="subcellular location">
    <subcellularLocation>
        <location evidence="5">Endoplasmic reticulum lumen</location>
    </subcellularLocation>
</comment>
<comment type="similarity">
    <text evidence="5">Belongs to the protein disulfide isomerase family.</text>
</comment>
<name>PDI15_ORYSJ</name>
<protein>
    <recommendedName>
        <fullName>Protein disulfide isomerase-like 1-5</fullName>
        <shortName>OsPDIL1-5</shortName>
        <ecNumber>5.3.4.1</ecNumber>
    </recommendedName>
    <alternativeName>
        <fullName>Protein disulfide isomerase-like 3-1</fullName>
        <shortName>OsPDIL3-1</shortName>
    </alternativeName>
</protein>
<gene>
    <name type="primary">PDIL1-5</name>
    <name type="synonym">PDIL3-1</name>
    <name type="ordered locus">Os06g0163400</name>
    <name type="ordered locus">LOC_Os06g06790</name>
    <name type="ORF">P0681F10.44</name>
</gene>
<evidence type="ECO:0000250" key="1"/>
<evidence type="ECO:0000255" key="2"/>
<evidence type="ECO:0000255" key="3">
    <source>
        <dbReference type="PROSITE-ProRule" id="PRU00691"/>
    </source>
</evidence>
<evidence type="ECO:0000255" key="4">
    <source>
        <dbReference type="PROSITE-ProRule" id="PRU10138"/>
    </source>
</evidence>
<evidence type="ECO:0000305" key="5"/>
<dbReference type="EC" id="5.3.4.1"/>
<dbReference type="EMBL" id="AB026295">
    <property type="protein sequence ID" value="BAD67648.1"/>
    <property type="molecule type" value="Genomic_DNA"/>
</dbReference>
<dbReference type="EMBL" id="AP008212">
    <property type="protein sequence ID" value="BAF18810.1"/>
    <property type="molecule type" value="Genomic_DNA"/>
</dbReference>
<dbReference type="EMBL" id="AP014962">
    <property type="protein sequence ID" value="BAS96309.1"/>
    <property type="molecule type" value="Genomic_DNA"/>
</dbReference>
<dbReference type="EMBL" id="AK073970">
    <property type="status" value="NOT_ANNOTATED_CDS"/>
    <property type="molecule type" value="mRNA"/>
</dbReference>
<dbReference type="RefSeq" id="XP_015642967.1">
    <property type="nucleotide sequence ID" value="XM_015787481.1"/>
</dbReference>
<dbReference type="SMR" id="Q5WA72"/>
<dbReference type="FunCoup" id="Q5WA72">
    <property type="interactions" value="621"/>
</dbReference>
<dbReference type="STRING" id="39947.Q5WA72"/>
<dbReference type="GlyCosmos" id="Q5WA72">
    <property type="glycosylation" value="1 site, No reported glycans"/>
</dbReference>
<dbReference type="PaxDb" id="39947-Q5WA72"/>
<dbReference type="EnsemblPlants" id="Os06t0163400-01">
    <property type="protein sequence ID" value="Os06t0163400-01"/>
    <property type="gene ID" value="Os06g0163400"/>
</dbReference>
<dbReference type="Gramene" id="Os06t0163400-01">
    <property type="protein sequence ID" value="Os06t0163400-01"/>
    <property type="gene ID" value="Os06g0163400"/>
</dbReference>
<dbReference type="KEGG" id="dosa:Os06g0163400"/>
<dbReference type="eggNOG" id="KOG0190">
    <property type="taxonomic scope" value="Eukaryota"/>
</dbReference>
<dbReference type="HOGENOM" id="CLU_025879_7_0_1"/>
<dbReference type="InParanoid" id="Q5WA72"/>
<dbReference type="OMA" id="FTPWCIN"/>
<dbReference type="OrthoDB" id="427280at2759"/>
<dbReference type="Proteomes" id="UP000000763">
    <property type="component" value="Chromosome 6"/>
</dbReference>
<dbReference type="Proteomes" id="UP000059680">
    <property type="component" value="Chromosome 6"/>
</dbReference>
<dbReference type="GO" id="GO:0005783">
    <property type="term" value="C:endoplasmic reticulum"/>
    <property type="evidence" value="ECO:0000318"/>
    <property type="project" value="GO_Central"/>
</dbReference>
<dbReference type="GO" id="GO:0005788">
    <property type="term" value="C:endoplasmic reticulum lumen"/>
    <property type="evidence" value="ECO:0007669"/>
    <property type="project" value="UniProtKB-SubCell"/>
</dbReference>
<dbReference type="GO" id="GO:0003756">
    <property type="term" value="F:protein disulfide isomerase activity"/>
    <property type="evidence" value="ECO:0000318"/>
    <property type="project" value="GO_Central"/>
</dbReference>
<dbReference type="GO" id="GO:0006457">
    <property type="term" value="P:protein folding"/>
    <property type="evidence" value="ECO:0000318"/>
    <property type="project" value="GO_Central"/>
</dbReference>
<dbReference type="GO" id="GO:0034976">
    <property type="term" value="P:response to endoplasmic reticulum stress"/>
    <property type="evidence" value="ECO:0000318"/>
    <property type="project" value="GO_Central"/>
</dbReference>
<dbReference type="CDD" id="cd02961">
    <property type="entry name" value="PDI_a_family"/>
    <property type="match status" value="1"/>
</dbReference>
<dbReference type="CDD" id="cd02995">
    <property type="entry name" value="PDI_a_PDI_a'_C"/>
    <property type="match status" value="1"/>
</dbReference>
<dbReference type="CDD" id="cd02982">
    <property type="entry name" value="PDI_b'_family"/>
    <property type="match status" value="1"/>
</dbReference>
<dbReference type="CDD" id="cd02981">
    <property type="entry name" value="PDI_b_family"/>
    <property type="match status" value="1"/>
</dbReference>
<dbReference type="FunFam" id="3.40.30.10:FF:000201">
    <property type="entry name" value="Protein disulfide isomerase-like 1-5"/>
    <property type="match status" value="1"/>
</dbReference>
<dbReference type="FunFam" id="3.40.30.10:FF:000204">
    <property type="entry name" value="Protein disulfide isomerase-like 1-6"/>
    <property type="match status" value="1"/>
</dbReference>
<dbReference type="FunFam" id="3.40.30.10:FF:000134">
    <property type="entry name" value="Protein disulfide-isomerase"/>
    <property type="match status" value="1"/>
</dbReference>
<dbReference type="FunFam" id="3.40.30.10:FF:000042">
    <property type="entry name" value="protein disulfide-isomerase A2"/>
    <property type="match status" value="1"/>
</dbReference>
<dbReference type="Gene3D" id="3.40.30.10">
    <property type="entry name" value="Glutaredoxin"/>
    <property type="match status" value="4"/>
</dbReference>
<dbReference type="InterPro" id="IPR036249">
    <property type="entry name" value="Thioredoxin-like_sf"/>
</dbReference>
<dbReference type="InterPro" id="IPR013766">
    <property type="entry name" value="Thioredoxin_domain"/>
</dbReference>
<dbReference type="PANTHER" id="PTHR18929">
    <property type="entry name" value="PROTEIN DISULFIDE ISOMERASE"/>
    <property type="match status" value="1"/>
</dbReference>
<dbReference type="PANTHER" id="PTHR18929:SF189">
    <property type="entry name" value="PROTEIN DISULFIDE ISOMERASE-LIKE 1-5-RELATED"/>
    <property type="match status" value="1"/>
</dbReference>
<dbReference type="Pfam" id="PF00085">
    <property type="entry name" value="Thioredoxin"/>
    <property type="match status" value="2"/>
</dbReference>
<dbReference type="Pfam" id="PF13848">
    <property type="entry name" value="Thioredoxin_6"/>
    <property type="match status" value="1"/>
</dbReference>
<dbReference type="SUPFAM" id="SSF52833">
    <property type="entry name" value="Thioredoxin-like"/>
    <property type="match status" value="4"/>
</dbReference>
<dbReference type="PROSITE" id="PS00014">
    <property type="entry name" value="ER_TARGET"/>
    <property type="match status" value="1"/>
</dbReference>
<dbReference type="PROSITE" id="PS51352">
    <property type="entry name" value="THIOREDOXIN_2"/>
    <property type="match status" value="2"/>
</dbReference>